<organism>
    <name type="scientific">Cyriopagopus hainanus</name>
    <name type="common">Chinese bird spider</name>
    <name type="synonym">Haplopelma hainanum</name>
    <dbReference type="NCBI Taxonomy" id="209901"/>
    <lineage>
        <taxon>Eukaryota</taxon>
        <taxon>Metazoa</taxon>
        <taxon>Ecdysozoa</taxon>
        <taxon>Arthropoda</taxon>
        <taxon>Chelicerata</taxon>
        <taxon>Arachnida</taxon>
        <taxon>Araneae</taxon>
        <taxon>Mygalomorphae</taxon>
        <taxon>Theraphosidae</taxon>
        <taxon>Haplopelma</taxon>
    </lineage>
</organism>
<sequence>MKVTLIAILTCAAVLVLHTTAAEELEAESQLMEVGMPDTELAAVDEERLFECSVSCEIEKEDNKDCKKKKCKGGWKCKFNMCVKV</sequence>
<protein>
    <recommendedName>
        <fullName>U4-theraphotoxin-Hhn1g</fullName>
        <shortName>U4-TRTX-Hhn1g</shortName>
    </recommendedName>
    <alternativeName>
        <fullName>Hainantoxin-II-15</fullName>
        <shortName>HNTX-II-15</shortName>
    </alternativeName>
</protein>
<evidence type="ECO:0000250" key="1"/>
<evidence type="ECO:0000255" key="2"/>
<evidence type="ECO:0000305" key="3"/>
<reference key="1">
    <citation type="journal article" date="2010" name="J. Proteome Res.">
        <title>Molecular diversification of peptide toxins from the tarantula Haplopelma hainanum (Ornithoctonus hainana) venom based on transcriptomic, peptidomic, and genomic analyses.</title>
        <authorList>
            <person name="Tang X."/>
            <person name="Zhang Y."/>
            <person name="Hu W."/>
            <person name="Xu D."/>
            <person name="Tao H."/>
            <person name="Yang X."/>
            <person name="Li Y."/>
            <person name="Jiang L."/>
            <person name="Liang S."/>
        </authorList>
    </citation>
    <scope>NUCLEOTIDE SEQUENCE [LARGE SCALE MRNA]</scope>
    <source>
        <tissue>Venom gland</tissue>
    </source>
</reference>
<accession>D2Y226</accession>
<proteinExistence type="evidence at transcript level"/>
<feature type="signal peptide" evidence="2">
    <location>
        <begin position="1"/>
        <end position="22"/>
    </location>
</feature>
<feature type="propeptide" id="PRO_0000400797" evidence="1">
    <location>
        <begin position="23"/>
        <end position="48"/>
    </location>
</feature>
<feature type="peptide" id="PRO_0000400798" description="U4-theraphotoxin-Hhn1g">
    <location>
        <begin position="49"/>
        <end position="85"/>
    </location>
</feature>
<feature type="disulfide bond" evidence="1">
    <location>
        <begin position="52"/>
        <end position="66"/>
    </location>
</feature>
<feature type="disulfide bond" evidence="1">
    <location>
        <begin position="56"/>
        <end position="77"/>
    </location>
</feature>
<feature type="disulfide bond" evidence="1">
    <location>
        <begin position="71"/>
        <end position="82"/>
    </location>
</feature>
<comment type="function">
    <text evidence="1">Postsynaptic neurotoxin.</text>
</comment>
<comment type="subcellular location">
    <subcellularLocation>
        <location evidence="1">Secreted</location>
    </subcellularLocation>
</comment>
<comment type="tissue specificity">
    <text>Expressed by the venom gland.</text>
</comment>
<comment type="similarity">
    <text evidence="3">Belongs to the neurotoxin 12 (Hwtx-2) family. 02 (Hwtx-2) subfamily.</text>
</comment>
<dbReference type="EMBL" id="GU292903">
    <property type="protein sequence ID" value="ADB56719.1"/>
    <property type="molecule type" value="mRNA"/>
</dbReference>
<dbReference type="ArachnoServer" id="AS001557">
    <property type="toxin name" value="U4-theraphotoxin-Hhn1g"/>
</dbReference>
<dbReference type="GO" id="GO:0005576">
    <property type="term" value="C:extracellular region"/>
    <property type="evidence" value="ECO:0007669"/>
    <property type="project" value="UniProtKB-SubCell"/>
</dbReference>
<dbReference type="GO" id="GO:0035792">
    <property type="term" value="C:host cell postsynaptic membrane"/>
    <property type="evidence" value="ECO:0007669"/>
    <property type="project" value="UniProtKB-KW"/>
</dbReference>
<dbReference type="GO" id="GO:0090729">
    <property type="term" value="F:toxin activity"/>
    <property type="evidence" value="ECO:0007669"/>
    <property type="project" value="UniProtKB-KW"/>
</dbReference>
<dbReference type="InterPro" id="IPR012625">
    <property type="entry name" value="Hwtx-2-like"/>
</dbReference>
<dbReference type="Pfam" id="PF08089">
    <property type="entry name" value="Toxin_20"/>
    <property type="match status" value="1"/>
</dbReference>
<dbReference type="SUPFAM" id="SSF57059">
    <property type="entry name" value="omega toxin-like"/>
    <property type="match status" value="1"/>
</dbReference>
<dbReference type="PROSITE" id="PS60022">
    <property type="entry name" value="HWTX_2"/>
    <property type="match status" value="1"/>
</dbReference>
<keyword id="KW-1015">Disulfide bond</keyword>
<keyword id="KW-0528">Neurotoxin</keyword>
<keyword id="KW-0629">Postsynaptic neurotoxin</keyword>
<keyword id="KW-0964">Secreted</keyword>
<keyword id="KW-0732">Signal</keyword>
<keyword id="KW-0800">Toxin</keyword>
<name>H2O01_CYRHA</name>